<accession>Q9PDP5</accession>
<reference key="1">
    <citation type="journal article" date="2000" name="Nature">
        <title>The genome sequence of the plant pathogen Xylella fastidiosa.</title>
        <authorList>
            <person name="Simpson A.J.G."/>
            <person name="Reinach F.C."/>
            <person name="Arruda P."/>
            <person name="Abreu F.A."/>
            <person name="Acencio M."/>
            <person name="Alvarenga R."/>
            <person name="Alves L.M.C."/>
            <person name="Araya J.E."/>
            <person name="Baia G.S."/>
            <person name="Baptista C.S."/>
            <person name="Barros M.H."/>
            <person name="Bonaccorsi E.D."/>
            <person name="Bordin S."/>
            <person name="Bove J.M."/>
            <person name="Briones M.R.S."/>
            <person name="Bueno M.R.P."/>
            <person name="Camargo A.A."/>
            <person name="Camargo L.E.A."/>
            <person name="Carraro D.M."/>
            <person name="Carrer H."/>
            <person name="Colauto N.B."/>
            <person name="Colombo C."/>
            <person name="Costa F.F."/>
            <person name="Costa M.C.R."/>
            <person name="Costa-Neto C.M."/>
            <person name="Coutinho L.L."/>
            <person name="Cristofani M."/>
            <person name="Dias-Neto E."/>
            <person name="Docena C."/>
            <person name="El-Dorry H."/>
            <person name="Facincani A.P."/>
            <person name="Ferreira A.J.S."/>
            <person name="Ferreira V.C.A."/>
            <person name="Ferro J.A."/>
            <person name="Fraga J.S."/>
            <person name="Franca S.C."/>
            <person name="Franco M.C."/>
            <person name="Frohme M."/>
            <person name="Furlan L.R."/>
            <person name="Garnier M."/>
            <person name="Goldman G.H."/>
            <person name="Goldman M.H.S."/>
            <person name="Gomes S.L."/>
            <person name="Gruber A."/>
            <person name="Ho P.L."/>
            <person name="Hoheisel J.D."/>
            <person name="Junqueira M.L."/>
            <person name="Kemper E.L."/>
            <person name="Kitajima J.P."/>
            <person name="Krieger J.E."/>
            <person name="Kuramae E.E."/>
            <person name="Laigret F."/>
            <person name="Lambais M.R."/>
            <person name="Leite L.C.C."/>
            <person name="Lemos E.G.M."/>
            <person name="Lemos M.V.F."/>
            <person name="Lopes S.A."/>
            <person name="Lopes C.R."/>
            <person name="Machado J.A."/>
            <person name="Machado M.A."/>
            <person name="Madeira A.M.B.N."/>
            <person name="Madeira H.M.F."/>
            <person name="Marino C.L."/>
            <person name="Marques M.V."/>
            <person name="Martins E.A.L."/>
            <person name="Martins E.M.F."/>
            <person name="Matsukuma A.Y."/>
            <person name="Menck C.F.M."/>
            <person name="Miracca E.C."/>
            <person name="Miyaki C.Y."/>
            <person name="Monteiro-Vitorello C.B."/>
            <person name="Moon D.H."/>
            <person name="Nagai M.A."/>
            <person name="Nascimento A.L.T.O."/>
            <person name="Netto L.E.S."/>
            <person name="Nhani A. Jr."/>
            <person name="Nobrega F.G."/>
            <person name="Nunes L.R."/>
            <person name="Oliveira M.A."/>
            <person name="de Oliveira M.C."/>
            <person name="de Oliveira R.C."/>
            <person name="Palmieri D.A."/>
            <person name="Paris A."/>
            <person name="Peixoto B.R."/>
            <person name="Pereira G.A.G."/>
            <person name="Pereira H.A. Jr."/>
            <person name="Pesquero J.B."/>
            <person name="Quaggio R.B."/>
            <person name="Roberto P.G."/>
            <person name="Rodrigues V."/>
            <person name="de Rosa A.J.M."/>
            <person name="de Rosa V.E. Jr."/>
            <person name="de Sa R.G."/>
            <person name="Santelli R.V."/>
            <person name="Sawasaki H.E."/>
            <person name="da Silva A.C.R."/>
            <person name="da Silva A.M."/>
            <person name="da Silva F.R."/>
            <person name="Silva W.A. Jr."/>
            <person name="da Silveira J.F."/>
            <person name="Silvestri M.L.Z."/>
            <person name="Siqueira W.J."/>
            <person name="de Souza A.A."/>
            <person name="de Souza A.P."/>
            <person name="Terenzi M.F."/>
            <person name="Truffi D."/>
            <person name="Tsai S.M."/>
            <person name="Tsuhako M.H."/>
            <person name="Vallada H."/>
            <person name="Van Sluys M.A."/>
            <person name="Verjovski-Almeida S."/>
            <person name="Vettore A.L."/>
            <person name="Zago M.A."/>
            <person name="Zatz M."/>
            <person name="Meidanis J."/>
            <person name="Setubal J.C."/>
        </authorList>
    </citation>
    <scope>NUCLEOTIDE SEQUENCE [LARGE SCALE GENOMIC DNA]</scope>
    <source>
        <strain>9a5c</strain>
    </source>
</reference>
<keyword id="KW-0028">Amino-acid biosynthesis</keyword>
<keyword id="KW-0057">Aromatic amino acid biosynthesis</keyword>
<keyword id="KW-0170">Cobalt</keyword>
<keyword id="KW-0963">Cytoplasm</keyword>
<keyword id="KW-0456">Lyase</keyword>
<keyword id="KW-0479">Metal-binding</keyword>
<keyword id="KW-0520">NAD</keyword>
<keyword id="KW-0547">Nucleotide-binding</keyword>
<keyword id="KW-0862">Zinc</keyword>
<proteinExistence type="inferred from homology"/>
<organism>
    <name type="scientific">Xylella fastidiosa (strain 9a5c)</name>
    <dbReference type="NCBI Taxonomy" id="160492"/>
    <lineage>
        <taxon>Bacteria</taxon>
        <taxon>Pseudomonadati</taxon>
        <taxon>Pseudomonadota</taxon>
        <taxon>Gammaproteobacteria</taxon>
        <taxon>Lysobacterales</taxon>
        <taxon>Lysobacteraceae</taxon>
        <taxon>Xylella</taxon>
    </lineage>
</organism>
<evidence type="ECO:0000255" key="1">
    <source>
        <dbReference type="HAMAP-Rule" id="MF_00110"/>
    </source>
</evidence>
<evidence type="ECO:0000256" key="2">
    <source>
        <dbReference type="SAM" id="MobiDB-lite"/>
    </source>
</evidence>
<sequence length="394" mass="42309">MTTLTPLRSVTVNNTYPYTIAIGPGLLHDPLRLAATIRGRHALILSDSEVAPRYAAQLQETLLRARPDLHLNVFTLPAGETSKSLENFSAAIAQLATLGATRDACLFALGGGVIGDLAGFTAACWMRGIDYVQVPTTLLAMVDSSVGGKTAVDIPQGKNMVGAFHPPRAVIADTDTLATLPLRELRAGLSEVIKYGAIRDPVFFHWLQTTREALLARDPAALAQAIARSCEHKADIVGRDPLEKGERVLLNLGHTFGHAIETAQGYSTPGSNNLNHGEAVAVGMVLAARLSNALSLAPAQDTETLKNLLDAYGLPTVLPSGLTPEMLLERMRLDKKNIAGRLRLVLWRGIGHAEAVSDVDEATVRQILANSTNQHTTYSPHQHATTKPPNRRPH</sequence>
<dbReference type="EC" id="4.2.3.4" evidence="1"/>
<dbReference type="EMBL" id="AE003849">
    <property type="protein sequence ID" value="AAF84143.1"/>
    <property type="molecule type" value="Genomic_DNA"/>
</dbReference>
<dbReference type="PIR" id="C82693">
    <property type="entry name" value="C82693"/>
</dbReference>
<dbReference type="RefSeq" id="WP_010893839.1">
    <property type="nucleotide sequence ID" value="NC_002488.3"/>
</dbReference>
<dbReference type="SMR" id="Q9PDP5"/>
<dbReference type="STRING" id="160492.XF_1334"/>
<dbReference type="KEGG" id="xfa:XF_1334"/>
<dbReference type="eggNOG" id="COG0337">
    <property type="taxonomic scope" value="Bacteria"/>
</dbReference>
<dbReference type="HOGENOM" id="CLU_001201_0_2_6"/>
<dbReference type="UniPathway" id="UPA00053">
    <property type="reaction ID" value="UER00085"/>
</dbReference>
<dbReference type="Proteomes" id="UP000000812">
    <property type="component" value="Chromosome"/>
</dbReference>
<dbReference type="GO" id="GO:0005737">
    <property type="term" value="C:cytoplasm"/>
    <property type="evidence" value="ECO:0007669"/>
    <property type="project" value="UniProtKB-SubCell"/>
</dbReference>
<dbReference type="GO" id="GO:0003856">
    <property type="term" value="F:3-dehydroquinate synthase activity"/>
    <property type="evidence" value="ECO:0007669"/>
    <property type="project" value="UniProtKB-UniRule"/>
</dbReference>
<dbReference type="GO" id="GO:0046872">
    <property type="term" value="F:metal ion binding"/>
    <property type="evidence" value="ECO:0007669"/>
    <property type="project" value="UniProtKB-KW"/>
</dbReference>
<dbReference type="GO" id="GO:0000166">
    <property type="term" value="F:nucleotide binding"/>
    <property type="evidence" value="ECO:0007669"/>
    <property type="project" value="UniProtKB-KW"/>
</dbReference>
<dbReference type="GO" id="GO:0008652">
    <property type="term" value="P:amino acid biosynthetic process"/>
    <property type="evidence" value="ECO:0007669"/>
    <property type="project" value="UniProtKB-KW"/>
</dbReference>
<dbReference type="GO" id="GO:0009073">
    <property type="term" value="P:aromatic amino acid family biosynthetic process"/>
    <property type="evidence" value="ECO:0007669"/>
    <property type="project" value="UniProtKB-KW"/>
</dbReference>
<dbReference type="GO" id="GO:0009423">
    <property type="term" value="P:chorismate biosynthetic process"/>
    <property type="evidence" value="ECO:0007669"/>
    <property type="project" value="UniProtKB-UniRule"/>
</dbReference>
<dbReference type="CDD" id="cd08195">
    <property type="entry name" value="DHQS"/>
    <property type="match status" value="1"/>
</dbReference>
<dbReference type="FunFam" id="3.40.50.1970:FF:000007">
    <property type="entry name" value="Pentafunctional AROM polypeptide"/>
    <property type="match status" value="1"/>
</dbReference>
<dbReference type="Gene3D" id="3.40.50.1970">
    <property type="match status" value="1"/>
</dbReference>
<dbReference type="Gene3D" id="1.20.1090.10">
    <property type="entry name" value="Dehydroquinate synthase-like - alpha domain"/>
    <property type="match status" value="1"/>
</dbReference>
<dbReference type="HAMAP" id="MF_00110">
    <property type="entry name" value="DHQ_synthase"/>
    <property type="match status" value="1"/>
</dbReference>
<dbReference type="InterPro" id="IPR050071">
    <property type="entry name" value="Dehydroquinate_synthase"/>
</dbReference>
<dbReference type="InterPro" id="IPR016037">
    <property type="entry name" value="DHQ_synth_AroB"/>
</dbReference>
<dbReference type="InterPro" id="IPR030963">
    <property type="entry name" value="DHQ_synth_fam"/>
</dbReference>
<dbReference type="InterPro" id="IPR030960">
    <property type="entry name" value="DHQS/DOIS_N"/>
</dbReference>
<dbReference type="InterPro" id="IPR056179">
    <property type="entry name" value="DHQS_C"/>
</dbReference>
<dbReference type="NCBIfam" id="TIGR01357">
    <property type="entry name" value="aroB"/>
    <property type="match status" value="1"/>
</dbReference>
<dbReference type="PANTHER" id="PTHR43622">
    <property type="entry name" value="3-DEHYDROQUINATE SYNTHASE"/>
    <property type="match status" value="1"/>
</dbReference>
<dbReference type="PANTHER" id="PTHR43622:SF7">
    <property type="entry name" value="3-DEHYDROQUINATE SYNTHASE, CHLOROPLASTIC"/>
    <property type="match status" value="1"/>
</dbReference>
<dbReference type="Pfam" id="PF01761">
    <property type="entry name" value="DHQ_synthase"/>
    <property type="match status" value="1"/>
</dbReference>
<dbReference type="Pfam" id="PF24621">
    <property type="entry name" value="DHQS_C"/>
    <property type="match status" value="1"/>
</dbReference>
<dbReference type="PIRSF" id="PIRSF001455">
    <property type="entry name" value="DHQ_synth"/>
    <property type="match status" value="1"/>
</dbReference>
<dbReference type="SUPFAM" id="SSF56796">
    <property type="entry name" value="Dehydroquinate synthase-like"/>
    <property type="match status" value="1"/>
</dbReference>
<protein>
    <recommendedName>
        <fullName evidence="1">3-dehydroquinate synthase</fullName>
        <shortName evidence="1">DHQS</shortName>
        <ecNumber evidence="1">4.2.3.4</ecNumber>
    </recommendedName>
</protein>
<feature type="chain" id="PRO_0000140811" description="3-dehydroquinate synthase">
    <location>
        <begin position="1"/>
        <end position="394"/>
    </location>
</feature>
<feature type="region of interest" description="Disordered" evidence="2">
    <location>
        <begin position="371"/>
        <end position="394"/>
    </location>
</feature>
<feature type="compositionally biased region" description="Polar residues" evidence="2">
    <location>
        <begin position="371"/>
        <end position="388"/>
    </location>
</feature>
<feature type="binding site" evidence="1">
    <location>
        <begin position="112"/>
        <end position="116"/>
    </location>
    <ligand>
        <name>NAD(+)</name>
        <dbReference type="ChEBI" id="CHEBI:57540"/>
    </ligand>
</feature>
<feature type="binding site" evidence="1">
    <location>
        <begin position="136"/>
        <end position="137"/>
    </location>
    <ligand>
        <name>NAD(+)</name>
        <dbReference type="ChEBI" id="CHEBI:57540"/>
    </ligand>
</feature>
<feature type="binding site" evidence="1">
    <location>
        <position position="149"/>
    </location>
    <ligand>
        <name>NAD(+)</name>
        <dbReference type="ChEBI" id="CHEBI:57540"/>
    </ligand>
</feature>
<feature type="binding site" evidence="1">
    <location>
        <position position="158"/>
    </location>
    <ligand>
        <name>NAD(+)</name>
        <dbReference type="ChEBI" id="CHEBI:57540"/>
    </ligand>
</feature>
<feature type="binding site" evidence="1">
    <location>
        <begin position="176"/>
        <end position="179"/>
    </location>
    <ligand>
        <name>NAD(+)</name>
        <dbReference type="ChEBI" id="CHEBI:57540"/>
    </ligand>
</feature>
<feature type="binding site" evidence="1">
    <location>
        <position position="191"/>
    </location>
    <ligand>
        <name>Zn(2+)</name>
        <dbReference type="ChEBI" id="CHEBI:29105"/>
    </ligand>
</feature>
<feature type="binding site" evidence="1">
    <location>
        <position position="254"/>
    </location>
    <ligand>
        <name>Zn(2+)</name>
        <dbReference type="ChEBI" id="CHEBI:29105"/>
    </ligand>
</feature>
<feature type="binding site" evidence="1">
    <location>
        <position position="276"/>
    </location>
    <ligand>
        <name>Zn(2+)</name>
        <dbReference type="ChEBI" id="CHEBI:29105"/>
    </ligand>
</feature>
<name>AROB_XYLFA</name>
<comment type="function">
    <text evidence="1">Catalyzes the conversion of 3-deoxy-D-arabino-heptulosonate 7-phosphate (DAHP) to dehydroquinate (DHQ).</text>
</comment>
<comment type="catalytic activity">
    <reaction evidence="1">
        <text>7-phospho-2-dehydro-3-deoxy-D-arabino-heptonate = 3-dehydroquinate + phosphate</text>
        <dbReference type="Rhea" id="RHEA:21968"/>
        <dbReference type="ChEBI" id="CHEBI:32364"/>
        <dbReference type="ChEBI" id="CHEBI:43474"/>
        <dbReference type="ChEBI" id="CHEBI:58394"/>
        <dbReference type="EC" id="4.2.3.4"/>
    </reaction>
</comment>
<comment type="cofactor">
    <cofactor evidence="1">
        <name>NAD(+)</name>
        <dbReference type="ChEBI" id="CHEBI:57540"/>
    </cofactor>
</comment>
<comment type="cofactor">
    <cofactor evidence="1">
        <name>Co(2+)</name>
        <dbReference type="ChEBI" id="CHEBI:48828"/>
    </cofactor>
    <cofactor evidence="1">
        <name>Zn(2+)</name>
        <dbReference type="ChEBI" id="CHEBI:29105"/>
    </cofactor>
    <text evidence="1">Binds 1 divalent metal cation per subunit. Can use either Co(2+) or Zn(2+).</text>
</comment>
<comment type="pathway">
    <text evidence="1">Metabolic intermediate biosynthesis; chorismate biosynthesis; chorismate from D-erythrose 4-phosphate and phosphoenolpyruvate: step 2/7.</text>
</comment>
<comment type="subcellular location">
    <subcellularLocation>
        <location evidence="1">Cytoplasm</location>
    </subcellularLocation>
</comment>
<comment type="similarity">
    <text evidence="1">Belongs to the sugar phosphate cyclases superfamily. Dehydroquinate synthase family.</text>
</comment>
<gene>
    <name evidence="1" type="primary">aroB</name>
    <name type="ordered locus">XF_1334</name>
</gene>